<organism>
    <name type="scientific">Mus musculus</name>
    <name type="common">Mouse</name>
    <dbReference type="NCBI Taxonomy" id="10090"/>
    <lineage>
        <taxon>Eukaryota</taxon>
        <taxon>Metazoa</taxon>
        <taxon>Chordata</taxon>
        <taxon>Craniata</taxon>
        <taxon>Vertebrata</taxon>
        <taxon>Euteleostomi</taxon>
        <taxon>Mammalia</taxon>
        <taxon>Eutheria</taxon>
        <taxon>Euarchontoglires</taxon>
        <taxon>Glires</taxon>
        <taxon>Rodentia</taxon>
        <taxon>Myomorpha</taxon>
        <taxon>Muroidea</taxon>
        <taxon>Muridae</taxon>
        <taxon>Murinae</taxon>
        <taxon>Mus</taxon>
        <taxon>Mus</taxon>
    </lineage>
</organism>
<gene>
    <name type="primary">Klf17</name>
    <name type="synonym">Gzf</name>
    <name type="synonym">Zfp393</name>
    <name type="synonym">Znf393</name>
</gene>
<comment type="function">
    <text evidence="4">Transcription repressor that binds to the promoter of target genes and prevents their expression. Acts as a negative regulator of epithelial-mesenchymal transition and metastasis in breast cancer. Specifically binds the 5'-CACCC-3' sequence in the promoter of ID1, a key metastasis regulator in breast cancer, and repress its expression. May be a germ cell-specific transcription factor that plays important roles in spermatid differentiation and oocyte development.</text>
</comment>
<comment type="subcellular location">
    <subcellularLocation>
        <location evidence="5">Nucleus</location>
    </subcellularLocation>
</comment>
<comment type="tissue specificity">
    <text evidence="3">Exclusively expressed in testis and ovary. Localized to step 3-8 spermatids in testis and growing oocytes in ovary.</text>
</comment>
<comment type="similarity">
    <text evidence="5">Belongs to the Sp1 C2H2-type zinc-finger protein family.</text>
</comment>
<reference key="1">
    <citation type="journal article" date="2002" name="Mech. Dev.">
        <title>Identification of Zfp393, a germ cell-specific gene encoding a novel zinc finger protein.</title>
        <authorList>
            <person name="Yan W."/>
            <person name="Burns K.H."/>
            <person name="Ma L."/>
            <person name="Matzuk M.M."/>
        </authorList>
    </citation>
    <scope>NUCLEOTIDE SEQUENCE [MRNA]</scope>
    <scope>TISSUE SPECIFICITY</scope>
    <source>
        <strain>129/Sv X C57BL</strain>
        <tissue>Testis</tissue>
    </source>
</reference>
<reference key="2">
    <citation type="journal article" date="2005" name="Science">
        <title>The transcriptional landscape of the mammalian genome.</title>
        <authorList>
            <person name="Carninci P."/>
            <person name="Kasukawa T."/>
            <person name="Katayama S."/>
            <person name="Gough J."/>
            <person name="Frith M.C."/>
            <person name="Maeda N."/>
            <person name="Oyama R."/>
            <person name="Ravasi T."/>
            <person name="Lenhard B."/>
            <person name="Wells C."/>
            <person name="Kodzius R."/>
            <person name="Shimokawa K."/>
            <person name="Bajic V.B."/>
            <person name="Brenner S.E."/>
            <person name="Batalov S."/>
            <person name="Forrest A.R."/>
            <person name="Zavolan M."/>
            <person name="Davis M.J."/>
            <person name="Wilming L.G."/>
            <person name="Aidinis V."/>
            <person name="Allen J.E."/>
            <person name="Ambesi-Impiombato A."/>
            <person name="Apweiler R."/>
            <person name="Aturaliya R.N."/>
            <person name="Bailey T.L."/>
            <person name="Bansal M."/>
            <person name="Baxter L."/>
            <person name="Beisel K.W."/>
            <person name="Bersano T."/>
            <person name="Bono H."/>
            <person name="Chalk A.M."/>
            <person name="Chiu K.P."/>
            <person name="Choudhary V."/>
            <person name="Christoffels A."/>
            <person name="Clutterbuck D.R."/>
            <person name="Crowe M.L."/>
            <person name="Dalla E."/>
            <person name="Dalrymple B.P."/>
            <person name="de Bono B."/>
            <person name="Della Gatta G."/>
            <person name="di Bernardo D."/>
            <person name="Down T."/>
            <person name="Engstrom P."/>
            <person name="Fagiolini M."/>
            <person name="Faulkner G."/>
            <person name="Fletcher C.F."/>
            <person name="Fukushima T."/>
            <person name="Furuno M."/>
            <person name="Futaki S."/>
            <person name="Gariboldi M."/>
            <person name="Georgii-Hemming P."/>
            <person name="Gingeras T.R."/>
            <person name="Gojobori T."/>
            <person name="Green R.E."/>
            <person name="Gustincich S."/>
            <person name="Harbers M."/>
            <person name="Hayashi Y."/>
            <person name="Hensch T.K."/>
            <person name="Hirokawa N."/>
            <person name="Hill D."/>
            <person name="Huminiecki L."/>
            <person name="Iacono M."/>
            <person name="Ikeo K."/>
            <person name="Iwama A."/>
            <person name="Ishikawa T."/>
            <person name="Jakt M."/>
            <person name="Kanapin A."/>
            <person name="Katoh M."/>
            <person name="Kawasawa Y."/>
            <person name="Kelso J."/>
            <person name="Kitamura H."/>
            <person name="Kitano H."/>
            <person name="Kollias G."/>
            <person name="Krishnan S.P."/>
            <person name="Kruger A."/>
            <person name="Kummerfeld S.K."/>
            <person name="Kurochkin I.V."/>
            <person name="Lareau L.F."/>
            <person name="Lazarevic D."/>
            <person name="Lipovich L."/>
            <person name="Liu J."/>
            <person name="Liuni S."/>
            <person name="McWilliam S."/>
            <person name="Madan Babu M."/>
            <person name="Madera M."/>
            <person name="Marchionni L."/>
            <person name="Matsuda H."/>
            <person name="Matsuzawa S."/>
            <person name="Miki H."/>
            <person name="Mignone F."/>
            <person name="Miyake S."/>
            <person name="Morris K."/>
            <person name="Mottagui-Tabar S."/>
            <person name="Mulder N."/>
            <person name="Nakano N."/>
            <person name="Nakauchi H."/>
            <person name="Ng P."/>
            <person name="Nilsson R."/>
            <person name="Nishiguchi S."/>
            <person name="Nishikawa S."/>
            <person name="Nori F."/>
            <person name="Ohara O."/>
            <person name="Okazaki Y."/>
            <person name="Orlando V."/>
            <person name="Pang K.C."/>
            <person name="Pavan W.J."/>
            <person name="Pavesi G."/>
            <person name="Pesole G."/>
            <person name="Petrovsky N."/>
            <person name="Piazza S."/>
            <person name="Reed J."/>
            <person name="Reid J.F."/>
            <person name="Ring B.Z."/>
            <person name="Ringwald M."/>
            <person name="Rost B."/>
            <person name="Ruan Y."/>
            <person name="Salzberg S.L."/>
            <person name="Sandelin A."/>
            <person name="Schneider C."/>
            <person name="Schoenbach C."/>
            <person name="Sekiguchi K."/>
            <person name="Semple C.A."/>
            <person name="Seno S."/>
            <person name="Sessa L."/>
            <person name="Sheng Y."/>
            <person name="Shibata Y."/>
            <person name="Shimada H."/>
            <person name="Shimada K."/>
            <person name="Silva D."/>
            <person name="Sinclair B."/>
            <person name="Sperling S."/>
            <person name="Stupka E."/>
            <person name="Sugiura K."/>
            <person name="Sultana R."/>
            <person name="Takenaka Y."/>
            <person name="Taki K."/>
            <person name="Tammoja K."/>
            <person name="Tan S.L."/>
            <person name="Tang S."/>
            <person name="Taylor M.S."/>
            <person name="Tegner J."/>
            <person name="Teichmann S.A."/>
            <person name="Ueda H.R."/>
            <person name="van Nimwegen E."/>
            <person name="Verardo R."/>
            <person name="Wei C.L."/>
            <person name="Yagi K."/>
            <person name="Yamanishi H."/>
            <person name="Zabarovsky E."/>
            <person name="Zhu S."/>
            <person name="Zimmer A."/>
            <person name="Hide W."/>
            <person name="Bult C."/>
            <person name="Grimmond S.M."/>
            <person name="Teasdale R.D."/>
            <person name="Liu E.T."/>
            <person name="Brusic V."/>
            <person name="Quackenbush J."/>
            <person name="Wahlestedt C."/>
            <person name="Mattick J.S."/>
            <person name="Hume D.A."/>
            <person name="Kai C."/>
            <person name="Sasaki D."/>
            <person name="Tomaru Y."/>
            <person name="Fukuda S."/>
            <person name="Kanamori-Katayama M."/>
            <person name="Suzuki M."/>
            <person name="Aoki J."/>
            <person name="Arakawa T."/>
            <person name="Iida J."/>
            <person name="Imamura K."/>
            <person name="Itoh M."/>
            <person name="Kato T."/>
            <person name="Kawaji H."/>
            <person name="Kawagashira N."/>
            <person name="Kawashima T."/>
            <person name="Kojima M."/>
            <person name="Kondo S."/>
            <person name="Konno H."/>
            <person name="Nakano K."/>
            <person name="Ninomiya N."/>
            <person name="Nishio T."/>
            <person name="Okada M."/>
            <person name="Plessy C."/>
            <person name="Shibata K."/>
            <person name="Shiraki T."/>
            <person name="Suzuki S."/>
            <person name="Tagami M."/>
            <person name="Waki K."/>
            <person name="Watahiki A."/>
            <person name="Okamura-Oho Y."/>
            <person name="Suzuki H."/>
            <person name="Kawai J."/>
            <person name="Hayashizaki Y."/>
        </authorList>
    </citation>
    <scope>NUCLEOTIDE SEQUENCE [LARGE SCALE MRNA]</scope>
    <source>
        <strain>C57BL/6J</strain>
        <tissue>Egg</tissue>
    </source>
</reference>
<reference key="3">
    <citation type="journal article" date="2009" name="PLoS Biol.">
        <title>Lineage-specific biology revealed by a finished genome assembly of the mouse.</title>
        <authorList>
            <person name="Church D.M."/>
            <person name="Goodstadt L."/>
            <person name="Hillier L.W."/>
            <person name="Zody M.C."/>
            <person name="Goldstein S."/>
            <person name="She X."/>
            <person name="Bult C.J."/>
            <person name="Agarwala R."/>
            <person name="Cherry J.L."/>
            <person name="DiCuccio M."/>
            <person name="Hlavina W."/>
            <person name="Kapustin Y."/>
            <person name="Meric P."/>
            <person name="Maglott D."/>
            <person name="Birtle Z."/>
            <person name="Marques A.C."/>
            <person name="Graves T."/>
            <person name="Zhou S."/>
            <person name="Teague B."/>
            <person name="Potamousis K."/>
            <person name="Churas C."/>
            <person name="Place M."/>
            <person name="Herschleb J."/>
            <person name="Runnheim R."/>
            <person name="Forrest D."/>
            <person name="Amos-Landgraf J."/>
            <person name="Schwartz D.C."/>
            <person name="Cheng Z."/>
            <person name="Lindblad-Toh K."/>
            <person name="Eichler E.E."/>
            <person name="Ponting C.P."/>
        </authorList>
    </citation>
    <scope>NUCLEOTIDE SEQUENCE [LARGE SCALE GENOMIC DNA]</scope>
    <source>
        <strain>C57BL/6J</strain>
    </source>
</reference>
<reference key="4">
    <citation type="submission" date="2005-09" db="EMBL/GenBank/DDBJ databases">
        <authorList>
            <person name="Mural R.J."/>
            <person name="Adams M.D."/>
            <person name="Myers E.W."/>
            <person name="Smith H.O."/>
            <person name="Venter J.C."/>
        </authorList>
    </citation>
    <scope>NUCLEOTIDE SEQUENCE [LARGE SCALE GENOMIC DNA]</scope>
</reference>
<reference key="5">
    <citation type="journal article" date="2004" name="Genome Res.">
        <title>The status, quality, and expansion of the NIH full-length cDNA project: the Mammalian Gene Collection (MGC).</title>
        <authorList>
            <consortium name="The MGC Project Team"/>
        </authorList>
    </citation>
    <scope>NUCLEOTIDE SEQUENCE [LARGE SCALE MRNA]</scope>
    <source>
        <strain>C57BL/6J</strain>
        <tissue>Egg</tissue>
    </source>
</reference>
<reference key="6">
    <citation type="journal article" date="2009" name="Nat. Cell Biol.">
        <title>KLF17 is a negative regulator of epithelial-mesenchymal transition and metastasis in breast cancer.</title>
        <authorList>
            <person name="Gumireddy K."/>
            <person name="Li A."/>
            <person name="Gimotty P.A."/>
            <person name="Klein-Szanto A.J."/>
            <person name="Showe L.C."/>
            <person name="Katsaros D."/>
            <person name="Coukos G."/>
            <person name="Zhang L."/>
            <person name="Huang Q."/>
        </authorList>
    </citation>
    <scope>FUNCTION</scope>
    <scope>DNA-BINDING</scope>
</reference>
<evidence type="ECO:0000255" key="1">
    <source>
        <dbReference type="PROSITE-ProRule" id="PRU00042"/>
    </source>
</evidence>
<evidence type="ECO:0000256" key="2">
    <source>
        <dbReference type="SAM" id="MobiDB-lite"/>
    </source>
</evidence>
<evidence type="ECO:0000269" key="3">
    <source>
    </source>
</evidence>
<evidence type="ECO:0000269" key="4">
    <source>
    </source>
</evidence>
<evidence type="ECO:0000305" key="5"/>
<proteinExistence type="evidence at protein level"/>
<name>KLF17_MOUSE</name>
<accession>Q8CFA7</accession>
<accession>B1ASI5</accession>
<accession>Q3UT30</accession>
<accession>Q6P233</accession>
<accession>Q9D351</accession>
<dbReference type="EMBL" id="AF508984">
    <property type="protein sequence ID" value="AAN31656.1"/>
    <property type="molecule type" value="mRNA"/>
</dbReference>
<dbReference type="EMBL" id="AK018361">
    <property type="protein sequence ID" value="BAB31177.1"/>
    <property type="molecule type" value="mRNA"/>
</dbReference>
<dbReference type="EMBL" id="AK139827">
    <property type="protein sequence ID" value="BAE24150.1"/>
    <property type="molecule type" value="mRNA"/>
</dbReference>
<dbReference type="EMBL" id="AL627128">
    <property type="status" value="NOT_ANNOTATED_CDS"/>
    <property type="molecule type" value="Genomic_DNA"/>
</dbReference>
<dbReference type="EMBL" id="AL671520">
    <property type="status" value="NOT_ANNOTATED_CDS"/>
    <property type="molecule type" value="Genomic_DNA"/>
</dbReference>
<dbReference type="EMBL" id="CH466552">
    <property type="protein sequence ID" value="EDL30543.1"/>
    <property type="molecule type" value="Genomic_DNA"/>
</dbReference>
<dbReference type="EMBL" id="BC064748">
    <property type="protein sequence ID" value="AAH64748.1"/>
    <property type="molecule type" value="mRNA"/>
</dbReference>
<dbReference type="CCDS" id="CCDS18537.1"/>
<dbReference type="RefSeq" id="NP_083692.2">
    <property type="nucleotide sequence ID" value="NM_029416.2"/>
</dbReference>
<dbReference type="SMR" id="Q8CFA7"/>
<dbReference type="FunCoup" id="Q8CFA7">
    <property type="interactions" value="6"/>
</dbReference>
<dbReference type="STRING" id="10090.ENSMUSP00000052316"/>
<dbReference type="GlyGen" id="Q8CFA7">
    <property type="glycosylation" value="1 site"/>
</dbReference>
<dbReference type="PhosphoSitePlus" id="Q8CFA7"/>
<dbReference type="PaxDb" id="10090-ENSMUSP00000052316"/>
<dbReference type="Antibodypedia" id="18431">
    <property type="antibodies" value="201 antibodies from 31 providers"/>
</dbReference>
<dbReference type="DNASU" id="75753"/>
<dbReference type="Ensembl" id="ENSMUST00000062747.6">
    <property type="protein sequence ID" value="ENSMUSP00000052316.6"/>
    <property type="gene ID" value="ENSMUSG00000048626.6"/>
</dbReference>
<dbReference type="GeneID" id="75753"/>
<dbReference type="KEGG" id="mmu:75753"/>
<dbReference type="UCSC" id="uc008uix.1">
    <property type="organism name" value="mouse"/>
</dbReference>
<dbReference type="AGR" id="MGI:2181068"/>
<dbReference type="CTD" id="128209"/>
<dbReference type="MGI" id="MGI:2181068">
    <property type="gene designation" value="Klf17"/>
</dbReference>
<dbReference type="VEuPathDB" id="HostDB:ENSMUSG00000048626"/>
<dbReference type="eggNOG" id="KOG1721">
    <property type="taxonomic scope" value="Eukaryota"/>
</dbReference>
<dbReference type="GeneTree" id="ENSGT00940000162020"/>
<dbReference type="HOGENOM" id="CLU_827795_0_0_1"/>
<dbReference type="InParanoid" id="Q8CFA7"/>
<dbReference type="OMA" id="MMPLGEP"/>
<dbReference type="OrthoDB" id="6077919at2759"/>
<dbReference type="PhylomeDB" id="Q8CFA7"/>
<dbReference type="TreeFam" id="TF350556"/>
<dbReference type="BioGRID-ORCS" id="75753">
    <property type="hits" value="0 hits in 76 CRISPR screens"/>
</dbReference>
<dbReference type="PRO" id="PR:Q8CFA7"/>
<dbReference type="Proteomes" id="UP000000589">
    <property type="component" value="Chromosome 4"/>
</dbReference>
<dbReference type="RNAct" id="Q8CFA7">
    <property type="molecule type" value="protein"/>
</dbReference>
<dbReference type="Bgee" id="ENSMUSG00000048626">
    <property type="expression patterns" value="Expressed in animal zygote and 48 other cell types or tissues"/>
</dbReference>
<dbReference type="GO" id="GO:0005634">
    <property type="term" value="C:nucleus"/>
    <property type="evidence" value="ECO:0007669"/>
    <property type="project" value="UniProtKB-SubCell"/>
</dbReference>
<dbReference type="GO" id="GO:0003700">
    <property type="term" value="F:DNA-binding transcription factor activity"/>
    <property type="evidence" value="ECO:0000314"/>
    <property type="project" value="UniProtKB"/>
</dbReference>
<dbReference type="GO" id="GO:0001227">
    <property type="term" value="F:DNA-binding transcription repressor activity, RNA polymerase II-specific"/>
    <property type="evidence" value="ECO:0000314"/>
    <property type="project" value="NTNU_SB"/>
</dbReference>
<dbReference type="GO" id="GO:0000978">
    <property type="term" value="F:RNA polymerase II cis-regulatory region sequence-specific DNA binding"/>
    <property type="evidence" value="ECO:0000314"/>
    <property type="project" value="NTNU_SB"/>
</dbReference>
<dbReference type="GO" id="GO:0000976">
    <property type="term" value="F:transcription cis-regulatory region binding"/>
    <property type="evidence" value="ECO:0000314"/>
    <property type="project" value="UniProtKB"/>
</dbReference>
<dbReference type="GO" id="GO:0008270">
    <property type="term" value="F:zinc ion binding"/>
    <property type="evidence" value="ECO:0007669"/>
    <property type="project" value="UniProtKB-KW"/>
</dbReference>
<dbReference type="GO" id="GO:0007276">
    <property type="term" value="P:gamete generation"/>
    <property type="evidence" value="ECO:0000314"/>
    <property type="project" value="MGI"/>
</dbReference>
<dbReference type="GO" id="GO:0000122">
    <property type="term" value="P:negative regulation of transcription by RNA polymerase II"/>
    <property type="evidence" value="ECO:0000314"/>
    <property type="project" value="NTNU_SB"/>
</dbReference>
<dbReference type="GO" id="GO:0006357">
    <property type="term" value="P:regulation of transcription by RNA polymerase II"/>
    <property type="evidence" value="ECO:0000314"/>
    <property type="project" value="UniProtKB"/>
</dbReference>
<dbReference type="FunFam" id="3.30.160.60:FF:003566">
    <property type="match status" value="1"/>
</dbReference>
<dbReference type="FunFam" id="3.30.160.60:FF:002051">
    <property type="entry name" value="Krueppel-like factor 17"/>
    <property type="match status" value="1"/>
</dbReference>
<dbReference type="FunFam" id="3.30.160.60:FF:000125">
    <property type="entry name" value="Putative zinc finger protein 143"/>
    <property type="match status" value="1"/>
</dbReference>
<dbReference type="Gene3D" id="3.30.160.60">
    <property type="entry name" value="Classic Zinc Finger"/>
    <property type="match status" value="3"/>
</dbReference>
<dbReference type="InterPro" id="IPR036236">
    <property type="entry name" value="Znf_C2H2_sf"/>
</dbReference>
<dbReference type="InterPro" id="IPR013087">
    <property type="entry name" value="Znf_C2H2_type"/>
</dbReference>
<dbReference type="PANTHER" id="PTHR23235:SF159">
    <property type="entry name" value="KRUEPPEL-LIKE FACTOR 17"/>
    <property type="match status" value="1"/>
</dbReference>
<dbReference type="PANTHER" id="PTHR23235">
    <property type="entry name" value="KRUEPPEL-LIKE TRANSCRIPTION FACTOR"/>
    <property type="match status" value="1"/>
</dbReference>
<dbReference type="Pfam" id="PF00096">
    <property type="entry name" value="zf-C2H2"/>
    <property type="match status" value="2"/>
</dbReference>
<dbReference type="SMART" id="SM00355">
    <property type="entry name" value="ZnF_C2H2"/>
    <property type="match status" value="3"/>
</dbReference>
<dbReference type="SUPFAM" id="SSF57667">
    <property type="entry name" value="beta-beta-alpha zinc fingers"/>
    <property type="match status" value="2"/>
</dbReference>
<dbReference type="PROSITE" id="PS00028">
    <property type="entry name" value="ZINC_FINGER_C2H2_1"/>
    <property type="match status" value="3"/>
</dbReference>
<dbReference type="PROSITE" id="PS50157">
    <property type="entry name" value="ZINC_FINGER_C2H2_2"/>
    <property type="match status" value="3"/>
</dbReference>
<sequence>MEQDNKEQAMHQPPMDNKMLVPVSNVPVSSGNSGFHQPPATQYLPEMMRSYMASAEELRCNEREWESQLIRSLPEHGVRCPSQLAPIPFQNYCQRSIGRGSHVMPVGSSGTLGVTISFSENLMPQGGLPSSRGVSVMAHSSAPAMPYPMPPTVPATTGSLKHGILLVPGMASAGTHAVAPFMDQMLHSINPCNPEMLPARFQQLLPLDSQDSLVTESNTQEEPFVREPPTPAPEGAESPSTSRGATRRQSPVSRPYVCTYNSCGKSYTKRSHLVSHQRKHTGVKPFACDWNGCTWKFFRSDELGRHKRIHTRYRPHKCDECDREFMRSDHLRQHKRTHLPK</sequence>
<feature type="chain" id="PRO_0000047556" description="Krueppel-like factor 17">
    <location>
        <begin position="1"/>
        <end position="341"/>
    </location>
</feature>
<feature type="zinc finger region" description="C2H2-type 1" evidence="1">
    <location>
        <begin position="256"/>
        <end position="280"/>
    </location>
</feature>
<feature type="zinc finger region" description="C2H2-type 2" evidence="1">
    <location>
        <begin position="286"/>
        <end position="310"/>
    </location>
</feature>
<feature type="zinc finger region" description="C2H2-type 3" evidence="1">
    <location>
        <begin position="316"/>
        <end position="338"/>
    </location>
</feature>
<feature type="region of interest" description="Disordered" evidence="2">
    <location>
        <begin position="214"/>
        <end position="252"/>
    </location>
</feature>
<feature type="compositionally biased region" description="Polar residues" evidence="2">
    <location>
        <begin position="238"/>
        <end position="252"/>
    </location>
</feature>
<feature type="sequence conflict" description="In Ref. 5; AAH64748." evidence="5" ref="5">
    <original>S</original>
    <variation>G</variation>
    <location>
        <position position="141"/>
    </location>
</feature>
<feature type="sequence conflict" description="In Ref. 2; BAB31177." evidence="5" ref="2">
    <original>L</original>
    <variation>M</variation>
    <location>
        <position position="165"/>
    </location>
</feature>
<protein>
    <recommendedName>
        <fullName>Krueppel-like factor 17</fullName>
    </recommendedName>
    <alternativeName>
        <fullName>Germ cell-specific zinc finger protein</fullName>
    </alternativeName>
    <alternativeName>
        <fullName>Zinc finger protein 393</fullName>
    </alternativeName>
</protein>
<keyword id="KW-0010">Activator</keyword>
<keyword id="KW-0238">DNA-binding</keyword>
<keyword id="KW-0479">Metal-binding</keyword>
<keyword id="KW-0539">Nucleus</keyword>
<keyword id="KW-1185">Reference proteome</keyword>
<keyword id="KW-0677">Repeat</keyword>
<keyword id="KW-0678">Repressor</keyword>
<keyword id="KW-0804">Transcription</keyword>
<keyword id="KW-0805">Transcription regulation</keyword>
<keyword id="KW-0862">Zinc</keyword>
<keyword id="KW-0863">Zinc-finger</keyword>